<comment type="function">
    <text evidence="2">Responsible for synthesis of pseudouridine from uracil at positions 1911, 1915 and 1917 in 23S ribosomal RNA.</text>
</comment>
<comment type="catalytic activity">
    <reaction evidence="2">
        <text>uridine(1911/1915/1917) in 23S rRNA = pseudouridine(1911/1915/1917) in 23S rRNA</text>
        <dbReference type="Rhea" id="RHEA:42524"/>
        <dbReference type="Rhea" id="RHEA-COMP:10097"/>
        <dbReference type="Rhea" id="RHEA-COMP:10098"/>
        <dbReference type="ChEBI" id="CHEBI:65314"/>
        <dbReference type="ChEBI" id="CHEBI:65315"/>
        <dbReference type="EC" id="5.4.99.23"/>
    </reaction>
</comment>
<comment type="subcellular location">
    <subcellularLocation>
        <location evidence="2">Cytoplasm</location>
    </subcellularLocation>
    <text evidence="2">Associates with late stage pre-50S ribosomal subunits.</text>
</comment>
<comment type="similarity">
    <text evidence="5">Belongs to the pseudouridine synthase RluA family.</text>
</comment>
<keyword id="KW-0963">Cytoplasm</keyword>
<keyword id="KW-0413">Isomerase</keyword>
<keyword id="KW-0694">RNA-binding</keyword>
<keyword id="KW-0698">rRNA processing</keyword>
<reference key="1">
    <citation type="journal article" date="2001" name="Nature">
        <title>Complete genome sequence of a multiple drug resistant Salmonella enterica serovar Typhi CT18.</title>
        <authorList>
            <person name="Parkhill J."/>
            <person name="Dougan G."/>
            <person name="James K.D."/>
            <person name="Thomson N.R."/>
            <person name="Pickard D."/>
            <person name="Wain J."/>
            <person name="Churcher C.M."/>
            <person name="Mungall K.L."/>
            <person name="Bentley S.D."/>
            <person name="Holden M.T.G."/>
            <person name="Sebaihia M."/>
            <person name="Baker S."/>
            <person name="Basham D."/>
            <person name="Brooks K."/>
            <person name="Chillingworth T."/>
            <person name="Connerton P."/>
            <person name="Cronin A."/>
            <person name="Davis P."/>
            <person name="Davies R.M."/>
            <person name="Dowd L."/>
            <person name="White N."/>
            <person name="Farrar J."/>
            <person name="Feltwell T."/>
            <person name="Hamlin N."/>
            <person name="Haque A."/>
            <person name="Hien T.T."/>
            <person name="Holroyd S."/>
            <person name="Jagels K."/>
            <person name="Krogh A."/>
            <person name="Larsen T.S."/>
            <person name="Leather S."/>
            <person name="Moule S."/>
            <person name="O'Gaora P."/>
            <person name="Parry C."/>
            <person name="Quail M.A."/>
            <person name="Rutherford K.M."/>
            <person name="Simmonds M."/>
            <person name="Skelton J."/>
            <person name="Stevens K."/>
            <person name="Whitehead S."/>
            <person name="Barrell B.G."/>
        </authorList>
    </citation>
    <scope>NUCLEOTIDE SEQUENCE [LARGE SCALE GENOMIC DNA]</scope>
    <source>
        <strain>CT18</strain>
    </source>
</reference>
<reference key="2">
    <citation type="journal article" date="2003" name="J. Bacteriol.">
        <title>Comparative genomics of Salmonella enterica serovar Typhi strains Ty2 and CT18.</title>
        <authorList>
            <person name="Deng W."/>
            <person name="Liou S.-R."/>
            <person name="Plunkett G. III"/>
            <person name="Mayhew G.F."/>
            <person name="Rose D.J."/>
            <person name="Burland V."/>
            <person name="Kodoyianni V."/>
            <person name="Schwartz D.C."/>
            <person name="Blattner F.R."/>
        </authorList>
    </citation>
    <scope>NUCLEOTIDE SEQUENCE [LARGE SCALE GENOMIC DNA]</scope>
    <source>
        <strain>ATCC 700931 / Ty2</strain>
    </source>
</reference>
<dbReference type="EC" id="5.4.99.23" evidence="2"/>
<dbReference type="EMBL" id="AL513382">
    <property type="protein sequence ID" value="CAD05842.1"/>
    <property type="molecule type" value="Genomic_DNA"/>
</dbReference>
<dbReference type="EMBL" id="AE014613">
    <property type="protein sequence ID" value="AAO70189.1"/>
    <property type="molecule type" value="Genomic_DNA"/>
</dbReference>
<dbReference type="RefSeq" id="NP_457133.1">
    <property type="nucleotide sequence ID" value="NC_003198.1"/>
</dbReference>
<dbReference type="RefSeq" id="WP_000079130.1">
    <property type="nucleotide sequence ID" value="NZ_WSUR01000036.1"/>
</dbReference>
<dbReference type="SMR" id="P65837"/>
<dbReference type="STRING" id="220341.gene:17586746"/>
<dbReference type="KEGG" id="stt:t2618"/>
<dbReference type="KEGG" id="sty:STY2851"/>
<dbReference type="PATRIC" id="fig|220341.7.peg.2900"/>
<dbReference type="eggNOG" id="COG0564">
    <property type="taxonomic scope" value="Bacteria"/>
</dbReference>
<dbReference type="HOGENOM" id="CLU_016902_4_0_6"/>
<dbReference type="OMA" id="KSERAYT"/>
<dbReference type="OrthoDB" id="9807829at2"/>
<dbReference type="Proteomes" id="UP000000541">
    <property type="component" value="Chromosome"/>
</dbReference>
<dbReference type="Proteomes" id="UP000002670">
    <property type="component" value="Chromosome"/>
</dbReference>
<dbReference type="GO" id="GO:0005737">
    <property type="term" value="C:cytoplasm"/>
    <property type="evidence" value="ECO:0007669"/>
    <property type="project" value="UniProtKB-SubCell"/>
</dbReference>
<dbReference type="GO" id="GO:0160140">
    <property type="term" value="F:23S rRNA pseudouridine(1911/1915/1917) synthase activity"/>
    <property type="evidence" value="ECO:0007669"/>
    <property type="project" value="UniProtKB-EC"/>
</dbReference>
<dbReference type="GO" id="GO:0003723">
    <property type="term" value="F:RNA binding"/>
    <property type="evidence" value="ECO:0007669"/>
    <property type="project" value="UniProtKB-KW"/>
</dbReference>
<dbReference type="GO" id="GO:0000455">
    <property type="term" value="P:enzyme-directed rRNA pseudouridine synthesis"/>
    <property type="evidence" value="ECO:0007669"/>
    <property type="project" value="TreeGrafter"/>
</dbReference>
<dbReference type="CDD" id="cd02869">
    <property type="entry name" value="PseudoU_synth_RluA_like"/>
    <property type="match status" value="1"/>
</dbReference>
<dbReference type="CDD" id="cd00165">
    <property type="entry name" value="S4"/>
    <property type="match status" value="1"/>
</dbReference>
<dbReference type="FunFam" id="3.10.290.10:FF:000011">
    <property type="entry name" value="Pseudouridine synthase"/>
    <property type="match status" value="1"/>
</dbReference>
<dbReference type="FunFam" id="3.30.2350.10:FF:000004">
    <property type="entry name" value="Pseudouridine synthase"/>
    <property type="match status" value="1"/>
</dbReference>
<dbReference type="Gene3D" id="6.10.140.230">
    <property type="match status" value="1"/>
</dbReference>
<dbReference type="Gene3D" id="3.30.2350.10">
    <property type="entry name" value="Pseudouridine synthase"/>
    <property type="match status" value="1"/>
</dbReference>
<dbReference type="Gene3D" id="3.10.290.10">
    <property type="entry name" value="RNA-binding S4 domain"/>
    <property type="match status" value="1"/>
</dbReference>
<dbReference type="InterPro" id="IPR020103">
    <property type="entry name" value="PsdUridine_synth_cat_dom_sf"/>
</dbReference>
<dbReference type="InterPro" id="IPR006224">
    <property type="entry name" value="PsdUridine_synth_RluA-like_CS"/>
</dbReference>
<dbReference type="InterPro" id="IPR006225">
    <property type="entry name" value="PsdUridine_synth_RluC/D"/>
</dbReference>
<dbReference type="InterPro" id="IPR006145">
    <property type="entry name" value="PsdUridine_synth_RsuA/RluA"/>
</dbReference>
<dbReference type="InterPro" id="IPR050188">
    <property type="entry name" value="RluA_PseudoU_synthase"/>
</dbReference>
<dbReference type="InterPro" id="IPR002942">
    <property type="entry name" value="S4_RNA-bd"/>
</dbReference>
<dbReference type="InterPro" id="IPR036986">
    <property type="entry name" value="S4_RNA-bd_sf"/>
</dbReference>
<dbReference type="NCBIfam" id="NF008385">
    <property type="entry name" value="PRK11180.1"/>
    <property type="match status" value="1"/>
</dbReference>
<dbReference type="NCBIfam" id="TIGR00005">
    <property type="entry name" value="rluA_subfam"/>
    <property type="match status" value="1"/>
</dbReference>
<dbReference type="PANTHER" id="PTHR21600">
    <property type="entry name" value="MITOCHONDRIAL RNA PSEUDOURIDINE SYNTHASE"/>
    <property type="match status" value="1"/>
</dbReference>
<dbReference type="PANTHER" id="PTHR21600:SF44">
    <property type="entry name" value="RIBOSOMAL LARGE SUBUNIT PSEUDOURIDINE SYNTHASE D"/>
    <property type="match status" value="1"/>
</dbReference>
<dbReference type="Pfam" id="PF00849">
    <property type="entry name" value="PseudoU_synth_2"/>
    <property type="match status" value="1"/>
</dbReference>
<dbReference type="Pfam" id="PF01479">
    <property type="entry name" value="S4"/>
    <property type="match status" value="1"/>
</dbReference>
<dbReference type="SMART" id="SM00363">
    <property type="entry name" value="S4"/>
    <property type="match status" value="1"/>
</dbReference>
<dbReference type="SUPFAM" id="SSF55174">
    <property type="entry name" value="Alpha-L RNA-binding motif"/>
    <property type="match status" value="1"/>
</dbReference>
<dbReference type="SUPFAM" id="SSF55120">
    <property type="entry name" value="Pseudouridine synthase"/>
    <property type="match status" value="1"/>
</dbReference>
<dbReference type="PROSITE" id="PS01129">
    <property type="entry name" value="PSI_RLU"/>
    <property type="match status" value="1"/>
</dbReference>
<dbReference type="PROSITE" id="PS50889">
    <property type="entry name" value="S4"/>
    <property type="match status" value="1"/>
</dbReference>
<accession>P65837</accession>
<accession>Q8XGG2</accession>
<sequence>MAQRVQLTATVSENQLGQRLDQALAEMFPDYSRSRIKEWILNQRVLVNGQLCDKPKEKVLGGERVAIDAEIDEEIRFEAQDIPLDIVYEDDDILVINKPRDLVVHPGAGNPDGTVLNALLHYYPPIADVPRAGIVHRLDKDTTGLMVVAKTVPAQTRLVESLQLREITREYEAVAIGHMTAGGTVNEPISRHPTKRTHMSVHPMGKPAVTHYRIMEHFRVHTRLRLRLETGRTHQIRVHMAHITHPLVGDQVYGGRPRPPKGASEEFISTLRKFDRQALHATMLRLYHPVSGIEMEWHAPIPQDMVDLIDAMRADFEDHKDDVDWL</sequence>
<name>RLUD_SALTI</name>
<evidence type="ECO:0000250" key="1"/>
<evidence type="ECO:0000250" key="2">
    <source>
        <dbReference type="UniProtKB" id="P33643"/>
    </source>
</evidence>
<evidence type="ECO:0000255" key="3">
    <source>
        <dbReference type="PROSITE-ProRule" id="PRU00182"/>
    </source>
</evidence>
<evidence type="ECO:0000256" key="4">
    <source>
        <dbReference type="SAM" id="MobiDB-lite"/>
    </source>
</evidence>
<evidence type="ECO:0000305" key="5"/>
<gene>
    <name type="primary">rluD</name>
    <name type="synonym">sfhB</name>
    <name type="ordered locus">STY2851</name>
    <name type="ordered locus">t2618</name>
</gene>
<feature type="initiator methionine" description="Removed" evidence="1">
    <location>
        <position position="1"/>
    </location>
</feature>
<feature type="chain" id="PRO_0000162700" description="Ribosomal large subunit pseudouridine synthase D">
    <location>
        <begin position="2"/>
        <end position="326"/>
    </location>
</feature>
<feature type="domain" description="S4 RNA-binding" evidence="3">
    <location>
        <begin position="18"/>
        <end position="91"/>
    </location>
</feature>
<feature type="region of interest" description="Disordered" evidence="4">
    <location>
        <begin position="183"/>
        <end position="203"/>
    </location>
</feature>
<feature type="active site" evidence="1">
    <location>
        <position position="139"/>
    </location>
</feature>
<protein>
    <recommendedName>
        <fullName evidence="2">Ribosomal large subunit pseudouridine synthase D</fullName>
        <ecNumber evidence="2">5.4.99.23</ecNumber>
    </recommendedName>
    <alternativeName>
        <fullName>23S rRNA pseudouridine(1911/1915/1917) synthase</fullName>
    </alternativeName>
    <alternativeName>
        <fullName>rRNA pseudouridylate synthase D</fullName>
    </alternativeName>
    <alternativeName>
        <fullName>rRNA-uridine isomerase D</fullName>
    </alternativeName>
</protein>
<organism>
    <name type="scientific">Salmonella typhi</name>
    <dbReference type="NCBI Taxonomy" id="90370"/>
    <lineage>
        <taxon>Bacteria</taxon>
        <taxon>Pseudomonadati</taxon>
        <taxon>Pseudomonadota</taxon>
        <taxon>Gammaproteobacteria</taxon>
        <taxon>Enterobacterales</taxon>
        <taxon>Enterobacteriaceae</taxon>
        <taxon>Salmonella</taxon>
    </lineage>
</organism>
<proteinExistence type="inferred from homology"/>